<proteinExistence type="evidence at protein level"/>
<comment type="function">
    <text evidence="2">Catalyzes one of the two ATP producing reactions in the glycolytic pathway via the reversible conversion of 1,3-diphosphoglycerate to 3-phosphoglycerate. Both L- and D- forms of purine and pyrimidine nucleotides can be used as substrates, but the activity is much lower on pyrimidines. In addition to its role as a glycolytic enzyme, it seems that PGK-1 acts as a polymerase alpha cofactor protein (primer recognition protein). Acts as a protein kinase when localized to the mitochondrion where it phosphorylates pyruvate dehydrogenase kinase PDK1 to inhibit pyruvate dehydrogenase complex activity and suppress the formation of acetyl-coenzyme A from pyruvate, and consequently inhibit oxidative phosphorylation and promote glycolysis. May play a role in sperm motility.</text>
</comment>
<comment type="catalytic activity">
    <reaction evidence="2">
        <text>(2R)-3-phosphoglycerate + ATP = (2R)-3-phospho-glyceroyl phosphate + ADP</text>
        <dbReference type="Rhea" id="RHEA:14801"/>
        <dbReference type="ChEBI" id="CHEBI:30616"/>
        <dbReference type="ChEBI" id="CHEBI:57604"/>
        <dbReference type="ChEBI" id="CHEBI:58272"/>
        <dbReference type="ChEBI" id="CHEBI:456216"/>
        <dbReference type="EC" id="2.7.2.3"/>
    </reaction>
</comment>
<comment type="catalytic activity">
    <reaction evidence="2">
        <text>L-seryl-[protein] + ATP = O-phospho-L-seryl-[protein] + ADP + H(+)</text>
        <dbReference type="Rhea" id="RHEA:17989"/>
        <dbReference type="Rhea" id="RHEA-COMP:9863"/>
        <dbReference type="Rhea" id="RHEA-COMP:11604"/>
        <dbReference type="ChEBI" id="CHEBI:15378"/>
        <dbReference type="ChEBI" id="CHEBI:29999"/>
        <dbReference type="ChEBI" id="CHEBI:30616"/>
        <dbReference type="ChEBI" id="CHEBI:83421"/>
        <dbReference type="ChEBI" id="CHEBI:456216"/>
        <dbReference type="EC" id="2.7.11.1"/>
    </reaction>
</comment>
<comment type="cofactor">
    <cofactor evidence="2">
        <name>Mg(2+)</name>
        <dbReference type="ChEBI" id="CHEBI:18420"/>
    </cofactor>
</comment>
<comment type="pathway">
    <text evidence="2">Carbohydrate degradation; glycolysis; pyruvate from D-glyceraldehyde 3-phosphate: step 2/5.</text>
</comment>
<comment type="subunit">
    <text evidence="2">Monomer. Interacts with kinase MAPK1/ERK2; the interaction is direct, occurs under hypoxic conditions, and promotes its interaction with PIN1. Interacts with peptidyl-prolyl cis-trans isomerase PIN1; the interaction is direct, occurs under hypoxic conditions, and targets the protein to the mitochondrion by promoting interactions with the TOM complex. Interacts with mitochondrial circRNA mcPGK1 (via its 2nd stem-loop); the interaction is direct and targets the protein to the mitochondrion by promoting interactions with the TOM complex. Interacts with pyruvate dehydrogenase kinase PDK1; the interaction is direct, occurs under hypoxic conditions and leads to PDK1-mediated inhibition of pyruvate dehydrogenase complex activity.</text>
</comment>
<comment type="subcellular location">
    <subcellularLocation>
        <location evidence="2">Cytoplasm</location>
        <location evidence="2">Cytosol</location>
    </subcellularLocation>
    <subcellularLocation>
        <location evidence="2">Mitochondrion matrix</location>
    </subcellularLocation>
    <text evidence="2">Hypoxic conditions promote mitochondrial targeting. Targeted to the mitochondrion following phosphorylation by MAPK1/ERK2, cis-trans isomerization by PIN1, and binding to mitochondrial circRNA mcPGK1.</text>
</comment>
<comment type="tissue specificity">
    <text evidence="4">Testis, lung, brain, skeletal muscle, liver, intestine, and kidney (at protein level).</text>
</comment>
<comment type="PTM">
    <text evidence="2">Phosphorylated at Ser-203 by MAPK1/ERK2 under hypoxic conditions, which promotes its mitochondrial targeting.</text>
</comment>
<comment type="similarity">
    <text evidence="5">Belongs to the phosphoglycerate kinase family.</text>
</comment>
<feature type="initiator methionine" description="Removed" evidence="10">
    <location>
        <position position="1"/>
    </location>
</feature>
<feature type="chain" id="PRO_0000145835" description="Phosphoglycerate kinase 1">
    <location>
        <begin position="2"/>
        <end position="417"/>
    </location>
</feature>
<feature type="region of interest" description="Mitochondrial targeting region exposed following cis-trans isomerization by PIN1 and recognized by the TOM complex for mitochondrial translocation of the protein" evidence="2">
    <location>
        <begin position="38"/>
        <end position="43"/>
    </location>
</feature>
<feature type="binding site" evidence="2">
    <location>
        <position position="23"/>
    </location>
    <ligand>
        <name>(2R)-3-phosphoglycerate</name>
        <dbReference type="ChEBI" id="CHEBI:58272"/>
    </ligand>
</feature>
<feature type="binding site" evidence="3">
    <location>
        <position position="24"/>
    </location>
    <ligand>
        <name>(2R)-3-phosphoglycerate</name>
        <dbReference type="ChEBI" id="CHEBI:58272"/>
    </ligand>
</feature>
<feature type="binding site" evidence="2">
    <location>
        <position position="25"/>
    </location>
    <ligand>
        <name>(2R)-3-phosphoglycerate</name>
        <dbReference type="ChEBI" id="CHEBI:58272"/>
    </ligand>
</feature>
<feature type="binding site" evidence="3">
    <location>
        <position position="26"/>
    </location>
    <ligand>
        <name>(2R)-3-phosphoglycerate</name>
        <dbReference type="ChEBI" id="CHEBI:58272"/>
    </ligand>
</feature>
<feature type="binding site" evidence="2">
    <location>
        <position position="38"/>
    </location>
    <ligand>
        <name>(2R)-3-phosphoglycerate</name>
        <dbReference type="ChEBI" id="CHEBI:58272"/>
    </ligand>
</feature>
<feature type="binding site" evidence="3">
    <location>
        <position position="39"/>
    </location>
    <ligand>
        <name>(2R)-3-phosphoglycerate</name>
        <dbReference type="ChEBI" id="CHEBI:58272"/>
    </ligand>
</feature>
<feature type="binding site" evidence="2">
    <location>
        <position position="62"/>
    </location>
    <ligand>
        <name>(2R)-3-phosphoglycerate</name>
        <dbReference type="ChEBI" id="CHEBI:58272"/>
    </ligand>
</feature>
<feature type="binding site" evidence="3">
    <location>
        <position position="63"/>
    </location>
    <ligand>
        <name>(2R)-3-phosphoglycerate</name>
        <dbReference type="ChEBI" id="CHEBI:58272"/>
    </ligand>
</feature>
<feature type="binding site" evidence="2">
    <location>
        <position position="65"/>
    </location>
    <ligand>
        <name>(2R)-3-phosphoglycerate</name>
        <dbReference type="ChEBI" id="CHEBI:58272"/>
    </ligand>
</feature>
<feature type="binding site" evidence="3">
    <location>
        <position position="66"/>
    </location>
    <ligand>
        <name>(2R)-3-phosphoglycerate</name>
        <dbReference type="ChEBI" id="CHEBI:58272"/>
    </ligand>
</feature>
<feature type="binding site" evidence="2">
    <location>
        <position position="122"/>
    </location>
    <ligand>
        <name>(2R)-3-phosphoglycerate</name>
        <dbReference type="ChEBI" id="CHEBI:58272"/>
    </ligand>
</feature>
<feature type="binding site" evidence="3">
    <location>
        <position position="123"/>
    </location>
    <ligand>
        <name>(2R)-3-phosphoglycerate</name>
        <dbReference type="ChEBI" id="CHEBI:58272"/>
    </ligand>
</feature>
<feature type="binding site" evidence="2">
    <location>
        <position position="170"/>
    </location>
    <ligand>
        <name>(2R)-3-phosphoglycerate</name>
        <dbReference type="ChEBI" id="CHEBI:58272"/>
    </ligand>
</feature>
<feature type="binding site" evidence="3">
    <location>
        <position position="171"/>
    </location>
    <ligand>
        <name>(2R)-3-phosphoglycerate</name>
        <dbReference type="ChEBI" id="CHEBI:58272"/>
    </ligand>
</feature>
<feature type="binding site" evidence="2">
    <location>
        <position position="214"/>
    </location>
    <ligand>
        <name>ADP</name>
        <dbReference type="ChEBI" id="CHEBI:456216"/>
    </ligand>
</feature>
<feature type="binding site" evidence="2">
    <location>
        <position position="214"/>
    </location>
    <ligand>
        <name>CDP</name>
        <dbReference type="ChEBI" id="CHEBI:58069"/>
    </ligand>
</feature>
<feature type="binding site" evidence="3">
    <location>
        <position position="215"/>
    </location>
    <ligand>
        <name>AMP</name>
        <dbReference type="ChEBI" id="CHEBI:456215"/>
    </ligand>
</feature>
<feature type="binding site" evidence="3">
    <location>
        <position position="215"/>
    </location>
    <ligand>
        <name>ATP</name>
        <dbReference type="ChEBI" id="CHEBI:30616"/>
    </ligand>
</feature>
<feature type="binding site" evidence="2">
    <location>
        <position position="215"/>
    </location>
    <ligand>
        <name>Mg(2+)</name>
        <dbReference type="ChEBI" id="CHEBI:18420"/>
    </ligand>
</feature>
<feature type="binding site" evidence="3">
    <location>
        <position position="216"/>
    </location>
    <ligand>
        <name>AMP</name>
        <dbReference type="ChEBI" id="CHEBI:456215"/>
    </ligand>
</feature>
<feature type="binding site" evidence="2">
    <location>
        <position position="218"/>
    </location>
    <ligand>
        <name>Mg(2+)</name>
        <dbReference type="ChEBI" id="CHEBI:18420"/>
    </ligand>
</feature>
<feature type="binding site" evidence="2">
    <location>
        <position position="219"/>
    </location>
    <ligand>
        <name>CDP</name>
        <dbReference type="ChEBI" id="CHEBI:58069"/>
    </ligand>
</feature>
<feature type="binding site" evidence="2">
    <location>
        <position position="219"/>
    </location>
    <ligand>
        <name>Mg(2+)</name>
        <dbReference type="ChEBI" id="CHEBI:18420"/>
    </ligand>
</feature>
<feature type="binding site" evidence="3">
    <location>
        <position position="220"/>
    </location>
    <ligand>
        <name>AMP</name>
        <dbReference type="ChEBI" id="CHEBI:456215"/>
    </ligand>
</feature>
<feature type="binding site" evidence="3">
    <location>
        <position position="220"/>
    </location>
    <ligand>
        <name>ATP</name>
        <dbReference type="ChEBI" id="CHEBI:30616"/>
    </ligand>
</feature>
<feature type="binding site" evidence="2">
    <location>
        <position position="238"/>
    </location>
    <ligand>
        <name>ADP</name>
        <dbReference type="ChEBI" id="CHEBI:456216"/>
    </ligand>
</feature>
<feature type="binding site" evidence="2">
    <location>
        <position position="238"/>
    </location>
    <ligand>
        <name>CDP</name>
        <dbReference type="ChEBI" id="CHEBI:58069"/>
    </ligand>
</feature>
<feature type="binding site" evidence="3">
    <location>
        <position position="239"/>
    </location>
    <ligand>
        <name>AMP</name>
        <dbReference type="ChEBI" id="CHEBI:456215"/>
    </ligand>
</feature>
<feature type="binding site" evidence="3">
    <location>
        <position position="239"/>
    </location>
    <ligand>
        <name>ATP</name>
        <dbReference type="ChEBI" id="CHEBI:30616"/>
    </ligand>
</feature>
<feature type="binding site" evidence="3">
    <location>
        <position position="313"/>
    </location>
    <ligand>
        <name>AMP</name>
        <dbReference type="ChEBI" id="CHEBI:456215"/>
    </ligand>
</feature>
<feature type="binding site" evidence="3">
    <location>
        <position position="313"/>
    </location>
    <ligand>
        <name>ATP</name>
        <dbReference type="ChEBI" id="CHEBI:30616"/>
    </ligand>
</feature>
<feature type="binding site" evidence="2">
    <location>
        <position position="338"/>
    </location>
    <ligand>
        <name>CDP</name>
        <dbReference type="ChEBI" id="CHEBI:58069"/>
    </ligand>
</feature>
<feature type="binding site" evidence="2">
    <location>
        <position position="340"/>
    </location>
    <ligand>
        <name>CDP</name>
        <dbReference type="ChEBI" id="CHEBI:58069"/>
    </ligand>
</feature>
<feature type="binding site" evidence="2">
    <location>
        <position position="343"/>
    </location>
    <ligand>
        <name>ADP</name>
        <dbReference type="ChEBI" id="CHEBI:456216"/>
    </ligand>
</feature>
<feature type="binding site" evidence="2">
    <location>
        <position position="343"/>
    </location>
    <ligand>
        <name>CDP</name>
        <dbReference type="ChEBI" id="CHEBI:58069"/>
    </ligand>
</feature>
<feature type="binding site" evidence="3">
    <location>
        <position position="344"/>
    </location>
    <ligand>
        <name>AMP</name>
        <dbReference type="ChEBI" id="CHEBI:456215"/>
    </ligand>
</feature>
<feature type="binding site" evidence="3">
    <location>
        <position position="344"/>
    </location>
    <ligand>
        <name>ATP</name>
        <dbReference type="ChEBI" id="CHEBI:30616"/>
    </ligand>
</feature>
<feature type="binding site" evidence="3">
    <location>
        <position position="375"/>
    </location>
    <ligand>
        <name>ATP</name>
        <dbReference type="ChEBI" id="CHEBI:30616"/>
    </ligand>
</feature>
<feature type="binding site" evidence="3">
    <location>
        <position position="375"/>
    </location>
    <ligand>
        <name>Mg(2+)</name>
        <dbReference type="ChEBI" id="CHEBI:18420"/>
    </ligand>
</feature>
<feature type="binding site" evidence="3">
    <location>
        <position position="376"/>
    </location>
    <ligand>
        <name>ATP</name>
        <dbReference type="ChEBI" id="CHEBI:30616"/>
    </ligand>
</feature>
<feature type="modified residue" description="N-acetylserine" evidence="10">
    <location>
        <position position="2"/>
    </location>
</feature>
<feature type="modified residue" description="Phosphoserine" evidence="2">
    <location>
        <position position="2"/>
    </location>
</feature>
<feature type="modified residue" description="Phosphoserine" evidence="2">
    <location>
        <position position="4"/>
    </location>
</feature>
<feature type="modified residue" description="N6-succinyllysine" evidence="10">
    <location>
        <position position="6"/>
    </location>
</feature>
<feature type="modified residue" description="N6-acetyllysine" evidence="10">
    <location>
        <position position="11"/>
    </location>
</feature>
<feature type="modified residue" description="N6-acetyllysine; alternate" evidence="2">
    <location>
        <position position="48"/>
    </location>
</feature>
<feature type="modified residue" description="N6-succinyllysine; alternate" evidence="10">
    <location>
        <position position="48"/>
    </location>
</feature>
<feature type="modified residue" description="N6-acetyllysine" evidence="2">
    <location>
        <position position="75"/>
    </location>
</feature>
<feature type="modified residue" description="Phosphotyrosine" evidence="7">
    <location>
        <position position="76"/>
    </location>
</feature>
<feature type="modified residue" description="N6-acetyllysine" evidence="2">
    <location>
        <position position="86"/>
    </location>
</feature>
<feature type="modified residue" description="N6-acetyllysine" evidence="10">
    <location>
        <position position="91"/>
    </location>
</feature>
<feature type="modified residue" description="N6-(2-hydroxyisobutyryl)lysine; alternate" evidence="2">
    <location>
        <position position="97"/>
    </location>
</feature>
<feature type="modified residue" description="N6-acetyllysine; alternate" evidence="2">
    <location>
        <position position="97"/>
    </location>
</feature>
<feature type="modified residue" description="N6-acetyllysine; alternate" evidence="2">
    <location>
        <position position="131"/>
    </location>
</feature>
<feature type="modified residue" description="N6-malonyllysine; alternate" evidence="1">
    <location>
        <position position="131"/>
    </location>
</feature>
<feature type="modified residue" description="N6-acetyllysine" evidence="2">
    <location>
        <position position="146"/>
    </location>
</feature>
<feature type="modified residue" description="N6-succinyllysine" evidence="10">
    <location>
        <position position="191"/>
    </location>
</feature>
<feature type="modified residue" description="Phosphotyrosine" evidence="2">
    <location>
        <position position="196"/>
    </location>
</feature>
<feature type="modified residue" description="N6-acetyllysine" evidence="2">
    <location>
        <position position="199"/>
    </location>
</feature>
<feature type="modified residue" description="Phosphoserine" evidence="6 8 9">
    <location>
        <position position="203"/>
    </location>
</feature>
<feature type="modified residue" description="N6-(2-hydroxyisobutyryl)lysine" evidence="2">
    <location>
        <position position="216"/>
    </location>
</feature>
<feature type="modified residue" description="N6-(2-hydroxyisobutyryl)lysine" evidence="2">
    <location>
        <position position="220"/>
    </location>
</feature>
<feature type="modified residue" description="N6-acetyllysine" evidence="2">
    <location>
        <position position="267"/>
    </location>
</feature>
<feature type="modified residue" description="N6-acetyllysine" evidence="10">
    <location>
        <position position="291"/>
    </location>
</feature>
<feature type="modified residue" description="N6-(2-hydroxyisobutyryl)lysine" evidence="2">
    <location>
        <position position="323"/>
    </location>
</feature>
<feature type="modified residue" description="N6-acetyllysine" evidence="10">
    <location>
        <position position="361"/>
    </location>
</feature>
<feature type="sequence conflict" description="In Ref. 1; AAA70267." evidence="5" ref="1">
    <original>K</original>
    <variation>N</variation>
    <location>
        <position position="56"/>
    </location>
</feature>
<feature type="sequence conflict" description="In Ref. 2; BAE26693." evidence="5" ref="2">
    <original>K</original>
    <variation>R</variation>
    <location>
        <position position="184"/>
    </location>
</feature>
<feature type="sequence conflict" description="In Ref. 2; BAE37790." evidence="5" ref="2">
    <original>I</original>
    <variation>V</variation>
    <location>
        <position position="265"/>
    </location>
</feature>
<feature type="helix" evidence="11">
    <location>
        <begin position="9"/>
        <end position="11"/>
    </location>
</feature>
<feature type="strand" evidence="11">
    <location>
        <begin position="18"/>
        <end position="22"/>
    </location>
</feature>
<feature type="strand" evidence="11">
    <location>
        <begin position="33"/>
        <end position="35"/>
    </location>
</feature>
<feature type="helix" evidence="11">
    <location>
        <begin position="38"/>
        <end position="52"/>
    </location>
</feature>
<feature type="strand" evidence="11">
    <location>
        <begin position="56"/>
        <end position="61"/>
    </location>
</feature>
<feature type="turn" evidence="11">
    <location>
        <begin position="73"/>
        <end position="75"/>
    </location>
</feature>
<feature type="helix" evidence="11">
    <location>
        <begin position="79"/>
        <end position="89"/>
    </location>
</feature>
<feature type="strand" evidence="11">
    <location>
        <begin position="93"/>
        <end position="95"/>
    </location>
</feature>
<feature type="strand" evidence="11">
    <location>
        <begin position="99"/>
        <end position="101"/>
    </location>
</feature>
<feature type="helix" evidence="11">
    <location>
        <begin position="102"/>
        <end position="109"/>
    </location>
</feature>
<feature type="strand" evidence="11">
    <location>
        <begin position="115"/>
        <end position="118"/>
    </location>
</feature>
<feature type="helix" evidence="11">
    <location>
        <begin position="122"/>
        <end position="124"/>
    </location>
</feature>
<feature type="turn" evidence="11">
    <location>
        <begin position="126"/>
        <end position="129"/>
    </location>
</feature>
<feature type="strand" evidence="11">
    <location>
        <begin position="130"/>
        <end position="133"/>
    </location>
</feature>
<feature type="strand" evidence="11">
    <location>
        <begin position="139"/>
        <end position="141"/>
    </location>
</feature>
<feature type="helix" evidence="11">
    <location>
        <begin position="144"/>
        <end position="155"/>
    </location>
</feature>
<feature type="strand" evidence="11">
    <location>
        <begin position="159"/>
        <end position="163"/>
    </location>
</feature>
<feature type="helix" evidence="11">
    <location>
        <begin position="166"/>
        <end position="168"/>
    </location>
</feature>
<feature type="helix" evidence="11">
    <location>
        <begin position="174"/>
        <end position="177"/>
    </location>
</feature>
<feature type="strand" evidence="11">
    <location>
        <begin position="184"/>
        <end position="186"/>
    </location>
</feature>
<feature type="helix" evidence="11">
    <location>
        <begin position="188"/>
        <end position="202"/>
    </location>
</feature>
<feature type="strand" evidence="11">
    <location>
        <begin position="206"/>
        <end position="212"/>
    </location>
</feature>
<feature type="helix" evidence="11">
    <location>
        <begin position="218"/>
        <end position="220"/>
    </location>
</feature>
<feature type="helix" evidence="11">
    <location>
        <begin position="221"/>
        <end position="228"/>
    </location>
</feature>
<feature type="strand" evidence="11">
    <location>
        <begin position="232"/>
        <end position="236"/>
    </location>
</feature>
<feature type="helix" evidence="11">
    <location>
        <begin position="238"/>
        <end position="240"/>
    </location>
</feature>
<feature type="helix" evidence="11">
    <location>
        <begin position="241"/>
        <end position="249"/>
    </location>
</feature>
<feature type="helix" evidence="11">
    <location>
        <begin position="260"/>
        <end position="263"/>
    </location>
</feature>
<feature type="helix" evidence="11">
    <location>
        <begin position="266"/>
        <end position="276"/>
    </location>
</feature>
<feature type="strand" evidence="11">
    <location>
        <begin position="279"/>
        <end position="281"/>
    </location>
</feature>
<feature type="strand" evidence="11">
    <location>
        <begin position="284"/>
        <end position="293"/>
    </location>
</feature>
<feature type="strand" evidence="11">
    <location>
        <begin position="298"/>
        <end position="302"/>
    </location>
</feature>
<feature type="turn" evidence="11">
    <location>
        <begin position="303"/>
        <end position="305"/>
    </location>
</feature>
<feature type="strand" evidence="11">
    <location>
        <begin position="312"/>
        <end position="316"/>
    </location>
</feature>
<feature type="helix" evidence="11">
    <location>
        <begin position="318"/>
        <end position="330"/>
    </location>
</feature>
<feature type="strand" evidence="11">
    <location>
        <begin position="332"/>
        <end position="338"/>
    </location>
</feature>
<feature type="helix" evidence="11">
    <location>
        <begin position="346"/>
        <end position="348"/>
    </location>
</feature>
<feature type="helix" evidence="11">
    <location>
        <begin position="350"/>
        <end position="364"/>
    </location>
</feature>
<feature type="strand" evidence="11">
    <location>
        <begin position="368"/>
        <end position="376"/>
    </location>
</feature>
<feature type="strand" evidence="11">
    <location>
        <begin position="389"/>
        <end position="394"/>
    </location>
</feature>
<feature type="helix" evidence="11">
    <location>
        <begin position="396"/>
        <end position="403"/>
    </location>
</feature>
<feature type="helix" evidence="11">
    <location>
        <begin position="409"/>
        <end position="412"/>
    </location>
</feature>
<organism>
    <name type="scientific">Mus musculus</name>
    <name type="common">Mouse</name>
    <dbReference type="NCBI Taxonomy" id="10090"/>
    <lineage>
        <taxon>Eukaryota</taxon>
        <taxon>Metazoa</taxon>
        <taxon>Chordata</taxon>
        <taxon>Craniata</taxon>
        <taxon>Vertebrata</taxon>
        <taxon>Euteleostomi</taxon>
        <taxon>Mammalia</taxon>
        <taxon>Eutheria</taxon>
        <taxon>Euarchontoglires</taxon>
        <taxon>Glires</taxon>
        <taxon>Rodentia</taxon>
        <taxon>Myomorpha</taxon>
        <taxon>Muroidea</taxon>
        <taxon>Muridae</taxon>
        <taxon>Murinae</taxon>
        <taxon>Mus</taxon>
        <taxon>Mus</taxon>
    </lineage>
</organism>
<sequence>MSLSNKLTLDKLDVKGKRVVMRVDFNVPMKNNQITNNQRIKAAVPSIKFCLDNGAKSVVLMSHLGRPDGVPMPDKYSLEPVAAELKSLLGKDVLFLKDCVGPEVENACANPAAGTVILLENLRFHVEEEGKGKDASGNKVKAEPAKIDAFRASLSKLGDVYVNDAFGTAHRAHSSMVGVNLPQKAGGFLMKKELNYFAKALESPERPFLAILGGAKVADKIQLINNMLDKVNEMIIGGGMAFTFLKVLNNMEIGTSLYDEEGAKIVKDLMSKAEKNGVKITLPVDFVTADKFDENAKTGQATVASGIPAGWMGLDCGTESSKKYAEAVGRAKQIVWNGPVGVFEWEAFARGTKSLMDEVVKATSRGCITIIGGGDTATCCAKWNTEDKVSHVSTGGGASLELLEGKVLPGVDALSNV</sequence>
<reference key="1">
    <citation type="journal article" date="1986" name="Gene">
        <title>The nucleotide sequence of a cDNA clone containing the entire coding region for mouse X-chromosome-linked phosphoglycerate kinase.</title>
        <authorList>
            <person name="Mori N."/>
            <person name="Singer-Sam J."/>
            <person name="Lee C.-Y."/>
            <person name="Riggs A.D."/>
        </authorList>
    </citation>
    <scope>NUCLEOTIDE SEQUENCE [MRNA]</scope>
</reference>
<reference key="2">
    <citation type="journal article" date="2005" name="Science">
        <title>The transcriptional landscape of the mammalian genome.</title>
        <authorList>
            <person name="Carninci P."/>
            <person name="Kasukawa T."/>
            <person name="Katayama S."/>
            <person name="Gough J."/>
            <person name="Frith M.C."/>
            <person name="Maeda N."/>
            <person name="Oyama R."/>
            <person name="Ravasi T."/>
            <person name="Lenhard B."/>
            <person name="Wells C."/>
            <person name="Kodzius R."/>
            <person name="Shimokawa K."/>
            <person name="Bajic V.B."/>
            <person name="Brenner S.E."/>
            <person name="Batalov S."/>
            <person name="Forrest A.R."/>
            <person name="Zavolan M."/>
            <person name="Davis M.J."/>
            <person name="Wilming L.G."/>
            <person name="Aidinis V."/>
            <person name="Allen J.E."/>
            <person name="Ambesi-Impiombato A."/>
            <person name="Apweiler R."/>
            <person name="Aturaliya R.N."/>
            <person name="Bailey T.L."/>
            <person name="Bansal M."/>
            <person name="Baxter L."/>
            <person name="Beisel K.W."/>
            <person name="Bersano T."/>
            <person name="Bono H."/>
            <person name="Chalk A.M."/>
            <person name="Chiu K.P."/>
            <person name="Choudhary V."/>
            <person name="Christoffels A."/>
            <person name="Clutterbuck D.R."/>
            <person name="Crowe M.L."/>
            <person name="Dalla E."/>
            <person name="Dalrymple B.P."/>
            <person name="de Bono B."/>
            <person name="Della Gatta G."/>
            <person name="di Bernardo D."/>
            <person name="Down T."/>
            <person name="Engstrom P."/>
            <person name="Fagiolini M."/>
            <person name="Faulkner G."/>
            <person name="Fletcher C.F."/>
            <person name="Fukushima T."/>
            <person name="Furuno M."/>
            <person name="Futaki S."/>
            <person name="Gariboldi M."/>
            <person name="Georgii-Hemming P."/>
            <person name="Gingeras T.R."/>
            <person name="Gojobori T."/>
            <person name="Green R.E."/>
            <person name="Gustincich S."/>
            <person name="Harbers M."/>
            <person name="Hayashi Y."/>
            <person name="Hensch T.K."/>
            <person name="Hirokawa N."/>
            <person name="Hill D."/>
            <person name="Huminiecki L."/>
            <person name="Iacono M."/>
            <person name="Ikeo K."/>
            <person name="Iwama A."/>
            <person name="Ishikawa T."/>
            <person name="Jakt M."/>
            <person name="Kanapin A."/>
            <person name="Katoh M."/>
            <person name="Kawasawa Y."/>
            <person name="Kelso J."/>
            <person name="Kitamura H."/>
            <person name="Kitano H."/>
            <person name="Kollias G."/>
            <person name="Krishnan S.P."/>
            <person name="Kruger A."/>
            <person name="Kummerfeld S.K."/>
            <person name="Kurochkin I.V."/>
            <person name="Lareau L.F."/>
            <person name="Lazarevic D."/>
            <person name="Lipovich L."/>
            <person name="Liu J."/>
            <person name="Liuni S."/>
            <person name="McWilliam S."/>
            <person name="Madan Babu M."/>
            <person name="Madera M."/>
            <person name="Marchionni L."/>
            <person name="Matsuda H."/>
            <person name="Matsuzawa S."/>
            <person name="Miki H."/>
            <person name="Mignone F."/>
            <person name="Miyake S."/>
            <person name="Morris K."/>
            <person name="Mottagui-Tabar S."/>
            <person name="Mulder N."/>
            <person name="Nakano N."/>
            <person name="Nakauchi H."/>
            <person name="Ng P."/>
            <person name="Nilsson R."/>
            <person name="Nishiguchi S."/>
            <person name="Nishikawa S."/>
            <person name="Nori F."/>
            <person name="Ohara O."/>
            <person name="Okazaki Y."/>
            <person name="Orlando V."/>
            <person name="Pang K.C."/>
            <person name="Pavan W.J."/>
            <person name="Pavesi G."/>
            <person name="Pesole G."/>
            <person name="Petrovsky N."/>
            <person name="Piazza S."/>
            <person name="Reed J."/>
            <person name="Reid J.F."/>
            <person name="Ring B.Z."/>
            <person name="Ringwald M."/>
            <person name="Rost B."/>
            <person name="Ruan Y."/>
            <person name="Salzberg S.L."/>
            <person name="Sandelin A."/>
            <person name="Schneider C."/>
            <person name="Schoenbach C."/>
            <person name="Sekiguchi K."/>
            <person name="Semple C.A."/>
            <person name="Seno S."/>
            <person name="Sessa L."/>
            <person name="Sheng Y."/>
            <person name="Shibata Y."/>
            <person name="Shimada H."/>
            <person name="Shimada K."/>
            <person name="Silva D."/>
            <person name="Sinclair B."/>
            <person name="Sperling S."/>
            <person name="Stupka E."/>
            <person name="Sugiura K."/>
            <person name="Sultana R."/>
            <person name="Takenaka Y."/>
            <person name="Taki K."/>
            <person name="Tammoja K."/>
            <person name="Tan S.L."/>
            <person name="Tang S."/>
            <person name="Taylor M.S."/>
            <person name="Tegner J."/>
            <person name="Teichmann S.A."/>
            <person name="Ueda H.R."/>
            <person name="van Nimwegen E."/>
            <person name="Verardo R."/>
            <person name="Wei C.L."/>
            <person name="Yagi K."/>
            <person name="Yamanishi H."/>
            <person name="Zabarovsky E."/>
            <person name="Zhu S."/>
            <person name="Zimmer A."/>
            <person name="Hide W."/>
            <person name="Bult C."/>
            <person name="Grimmond S.M."/>
            <person name="Teasdale R.D."/>
            <person name="Liu E.T."/>
            <person name="Brusic V."/>
            <person name="Quackenbush J."/>
            <person name="Wahlestedt C."/>
            <person name="Mattick J.S."/>
            <person name="Hume D.A."/>
            <person name="Kai C."/>
            <person name="Sasaki D."/>
            <person name="Tomaru Y."/>
            <person name="Fukuda S."/>
            <person name="Kanamori-Katayama M."/>
            <person name="Suzuki M."/>
            <person name="Aoki J."/>
            <person name="Arakawa T."/>
            <person name="Iida J."/>
            <person name="Imamura K."/>
            <person name="Itoh M."/>
            <person name="Kato T."/>
            <person name="Kawaji H."/>
            <person name="Kawagashira N."/>
            <person name="Kawashima T."/>
            <person name="Kojima M."/>
            <person name="Kondo S."/>
            <person name="Konno H."/>
            <person name="Nakano K."/>
            <person name="Ninomiya N."/>
            <person name="Nishio T."/>
            <person name="Okada M."/>
            <person name="Plessy C."/>
            <person name="Shibata K."/>
            <person name="Shiraki T."/>
            <person name="Suzuki S."/>
            <person name="Tagami M."/>
            <person name="Waki K."/>
            <person name="Watahiki A."/>
            <person name="Okamura-Oho Y."/>
            <person name="Suzuki H."/>
            <person name="Kawai J."/>
            <person name="Hayashizaki Y."/>
        </authorList>
    </citation>
    <scope>NUCLEOTIDE SEQUENCE [LARGE SCALE MRNA]</scope>
    <source>
        <strain>C57BL/6J</strain>
        <tissue>Eye</tissue>
        <tissue>Placenta</tissue>
    </source>
</reference>
<reference key="3">
    <citation type="journal article" date="2009" name="PLoS Biol.">
        <title>Lineage-specific biology revealed by a finished genome assembly of the mouse.</title>
        <authorList>
            <person name="Church D.M."/>
            <person name="Goodstadt L."/>
            <person name="Hillier L.W."/>
            <person name="Zody M.C."/>
            <person name="Goldstein S."/>
            <person name="She X."/>
            <person name="Bult C.J."/>
            <person name="Agarwala R."/>
            <person name="Cherry J.L."/>
            <person name="DiCuccio M."/>
            <person name="Hlavina W."/>
            <person name="Kapustin Y."/>
            <person name="Meric P."/>
            <person name="Maglott D."/>
            <person name="Birtle Z."/>
            <person name="Marques A.C."/>
            <person name="Graves T."/>
            <person name="Zhou S."/>
            <person name="Teague B."/>
            <person name="Potamousis K."/>
            <person name="Churas C."/>
            <person name="Place M."/>
            <person name="Herschleb J."/>
            <person name="Runnheim R."/>
            <person name="Forrest D."/>
            <person name="Amos-Landgraf J."/>
            <person name="Schwartz D.C."/>
            <person name="Cheng Z."/>
            <person name="Lindblad-Toh K."/>
            <person name="Eichler E.E."/>
            <person name="Ponting C.P."/>
        </authorList>
    </citation>
    <scope>NUCLEOTIDE SEQUENCE [LARGE SCALE GENOMIC DNA]</scope>
    <source>
        <strain>C57BL/6J</strain>
    </source>
</reference>
<reference key="4">
    <citation type="journal article" date="2004" name="Genome Res.">
        <title>The status, quality, and expansion of the NIH full-length cDNA project: the Mammalian Gene Collection (MGC).</title>
        <authorList>
            <consortium name="The MGC Project Team"/>
        </authorList>
    </citation>
    <scope>NUCLEOTIDE SEQUENCE [LARGE SCALE MRNA]</scope>
    <source>
        <strain>129</strain>
        <strain>C57BL/6J</strain>
        <tissue>Brain</tissue>
        <tissue>Mammary tumor</tissue>
    </source>
</reference>
<reference key="5">
    <citation type="journal article" date="1987" name="Gene">
        <title>Cloning and expression of the mouse pgk-1 gene and the nucleotide sequence of its promoter.</title>
        <authorList>
            <person name="Adra C.N."/>
            <person name="Boer P.H."/>
            <person name="McBurney M.W."/>
        </authorList>
    </citation>
    <scope>NUCLEOTIDE SEQUENCE [GENOMIC DNA] OF 1-21</scope>
</reference>
<reference key="6">
    <citation type="journal article" date="1990" name="Biochim. Biophys. Acta">
        <title>Selective activation of testis-specific genes in cultured rat spermatogenic cells.</title>
        <authorList>
            <person name="Tamaru M."/>
            <person name="Nagao Y."/>
            <person name="Taira M."/>
            <person name="Tatibana M."/>
            <person name="Masamune Y."/>
            <person name="Nakanishi Y."/>
        </authorList>
    </citation>
    <scope>NUCLEOTIDE SEQUENCE [GENOMIC DNA] OF 1-21</scope>
</reference>
<reference key="7">
    <citation type="journal article" date="1990" name="Biochem. Genet.">
        <title>Polymorphisms in the coding and noncoding regions of murine Pgk-1 alleles.</title>
        <authorList>
            <person name="Boer P.H."/>
            <person name="Potten H."/>
            <person name="Adra C.N."/>
            <person name="Jardine K."/>
            <person name="Mullhofer G."/>
            <person name="McBurney M.W."/>
        </authorList>
    </citation>
    <scope>NUCLEOTIDE SEQUENCE [GENOMIC DNA] OF 1-21</scope>
</reference>
<reference key="8">
    <citation type="submission" date="2007-07" db="UniProtKB">
        <authorList>
            <person name="Lubec G."/>
            <person name="Kang S.U."/>
            <person name="Klug S."/>
            <person name="Yang J.W."/>
            <person name="Zigmond M."/>
        </authorList>
    </citation>
    <scope>PROTEIN SEQUENCE OF 23-30; 76-86; 98-123; 157-184; 193-216; 247-264; 280-297; 333-350 AND 389-417</scope>
    <scope>IDENTIFICATION BY MASS SPECTROMETRY</scope>
    <source>
        <strain>C57BL/6J</strain>
        <tissue>Brain</tissue>
        <tissue>Hippocampus</tissue>
    </source>
</reference>
<reference key="9">
    <citation type="journal article" date="1986" name="FEBS Lett.">
        <title>Evolutionary conservation of the substrate-binding cleft of phosphoglycerate kinases.</title>
        <authorList>
            <person name="Mori N."/>
            <person name="Singer-Sam J."/>
            <person name="Riggs A.D."/>
        </authorList>
    </citation>
    <scope>DISCUSSION OF SEQUENCE</scope>
</reference>
<reference key="10">
    <citation type="journal article" date="2007" name="Proc. Natl. Acad. Sci. U.S.A.">
        <title>Large-scale phosphorylation analysis of mouse liver.</title>
        <authorList>
            <person name="Villen J."/>
            <person name="Beausoleil S.A."/>
            <person name="Gerber S.A."/>
            <person name="Gygi S.P."/>
        </authorList>
    </citation>
    <scope>PHOSPHORYLATION [LARGE SCALE ANALYSIS] AT SER-203</scope>
    <scope>IDENTIFICATION BY MASS SPECTROMETRY [LARGE SCALE ANALYSIS]</scope>
    <source>
        <tissue>Liver</tissue>
    </source>
</reference>
<reference key="11">
    <citation type="journal article" date="2008" name="J. Proteome Res.">
        <title>Large-scale identification and evolution indexing of tyrosine phosphorylation sites from murine brain.</title>
        <authorList>
            <person name="Ballif B.A."/>
            <person name="Carey G.R."/>
            <person name="Sunyaev S.R."/>
            <person name="Gygi S.P."/>
        </authorList>
    </citation>
    <scope>PHOSPHORYLATION [LARGE SCALE ANALYSIS] AT TYR-76</scope>
    <scope>IDENTIFICATION BY MASS SPECTROMETRY [LARGE SCALE ANALYSIS]</scope>
    <source>
        <tissue>Brain</tissue>
    </source>
</reference>
<reference key="12">
    <citation type="journal article" date="2009" name="Mol. Cell. Proteomics">
        <title>Large scale localization of protein phosphorylation by use of electron capture dissociation mass spectrometry.</title>
        <authorList>
            <person name="Sweet S.M."/>
            <person name="Bailey C.M."/>
            <person name="Cunningham D.L."/>
            <person name="Heath J.K."/>
            <person name="Cooper H.J."/>
        </authorList>
    </citation>
    <scope>PHOSPHORYLATION [LARGE SCALE ANALYSIS] AT SER-203</scope>
    <scope>IDENTIFICATION BY MASS SPECTROMETRY [LARGE SCALE ANALYSIS]</scope>
    <source>
        <tissue>Embryonic fibroblast</tissue>
    </source>
</reference>
<reference key="13">
    <citation type="journal article" date="2010" name="Biol. Reprod.">
        <title>Phosphoglycerate kinase 2 (PGK2) is essential for sperm function and male fertility in mice.</title>
        <authorList>
            <person name="Danshina P.V."/>
            <person name="Geyer C.B."/>
            <person name="Dai Q."/>
            <person name="Goulding E.H."/>
            <person name="Willis W.D."/>
            <person name="Kitto G.B."/>
            <person name="McCarrey J.R."/>
            <person name="Eddy E.M."/>
            <person name="O'Brien D.A."/>
        </authorList>
    </citation>
    <scope>TISSUE SPECIFICITY</scope>
</reference>
<reference key="14">
    <citation type="journal article" date="2010" name="Cell">
        <title>A tissue-specific atlas of mouse protein phosphorylation and expression.</title>
        <authorList>
            <person name="Huttlin E.L."/>
            <person name="Jedrychowski M.P."/>
            <person name="Elias J.E."/>
            <person name="Goswami T."/>
            <person name="Rad R."/>
            <person name="Beausoleil S.A."/>
            <person name="Villen J."/>
            <person name="Haas W."/>
            <person name="Sowa M.E."/>
            <person name="Gygi S.P."/>
        </authorList>
    </citation>
    <scope>PHOSPHORYLATION [LARGE SCALE ANALYSIS] AT SER-203</scope>
    <scope>IDENTIFICATION BY MASS SPECTROMETRY [LARGE SCALE ANALYSIS]</scope>
    <source>
        <tissue>Brain</tissue>
        <tissue>Brown adipose tissue</tissue>
        <tissue>Heart</tissue>
        <tissue>Kidney</tissue>
        <tissue>Liver</tissue>
        <tissue>Lung</tissue>
        <tissue>Pancreas</tissue>
        <tissue>Spleen</tissue>
        <tissue>Testis</tissue>
    </source>
</reference>
<reference key="15">
    <citation type="journal article" date="2013" name="Mol. Cell">
        <title>SIRT5-mediated lysine desuccinylation impacts diverse metabolic pathways.</title>
        <authorList>
            <person name="Park J."/>
            <person name="Chen Y."/>
            <person name="Tishkoff D.X."/>
            <person name="Peng C."/>
            <person name="Tan M."/>
            <person name="Dai L."/>
            <person name="Xie Z."/>
            <person name="Zhang Y."/>
            <person name="Zwaans B.M."/>
            <person name="Skinner M.E."/>
            <person name="Lombard D.B."/>
            <person name="Zhao Y."/>
        </authorList>
    </citation>
    <scope>ACETYLATION [LARGE SCALE ANALYSIS] AT SER-2; LYS-11; LYS-91; LYS-291 AND LYS-361</scope>
    <scope>SUCCINYLATION [LARGE SCALE ANALYSIS] AT LYS-6; LYS-48 AND LYS-191</scope>
    <scope>CLEAVAGE OF INITIATOR METHIONINE [LARGE SCALE ANALYSIS]</scope>
    <scope>IDENTIFICATION BY MASS SPECTROMETRY [LARGE SCALE ANALYSIS]</scope>
    <source>
        <tissue>Embryonic fibroblast</tissue>
        <tissue>Liver</tissue>
    </source>
</reference>
<gene>
    <name type="primary">Pgk1</name>
    <name type="synonym">Pgk-1</name>
</gene>
<keyword id="KW-0002">3D-structure</keyword>
<keyword id="KW-0007">Acetylation</keyword>
<keyword id="KW-0067">ATP-binding</keyword>
<keyword id="KW-0963">Cytoplasm</keyword>
<keyword id="KW-0903">Direct protein sequencing</keyword>
<keyword id="KW-0324">Glycolysis</keyword>
<keyword id="KW-0379">Hydroxylation</keyword>
<keyword id="KW-0418">Kinase</keyword>
<keyword id="KW-0460">Magnesium</keyword>
<keyword id="KW-0479">Metal-binding</keyword>
<keyword id="KW-0496">Mitochondrion</keyword>
<keyword id="KW-0547">Nucleotide-binding</keyword>
<keyword id="KW-0597">Phosphoprotein</keyword>
<keyword id="KW-1185">Reference proteome</keyword>
<keyword id="KW-0808">Transferase</keyword>
<name>PGK1_MOUSE</name>
<protein>
    <recommendedName>
        <fullName>Phosphoglycerate kinase 1</fullName>
        <ecNumber evidence="2">2.7.11.1</ecNumber>
        <ecNumber evidence="2">2.7.2.3</ecNumber>
    </recommendedName>
</protein>
<evidence type="ECO:0000250" key="1"/>
<evidence type="ECO:0000250" key="2">
    <source>
        <dbReference type="UniProtKB" id="P00558"/>
    </source>
</evidence>
<evidence type="ECO:0000250" key="3">
    <source>
        <dbReference type="UniProtKB" id="Q7SIB7"/>
    </source>
</evidence>
<evidence type="ECO:0000269" key="4">
    <source>
    </source>
</evidence>
<evidence type="ECO:0000305" key="5"/>
<evidence type="ECO:0007744" key="6">
    <source>
    </source>
</evidence>
<evidence type="ECO:0007744" key="7">
    <source>
    </source>
</evidence>
<evidence type="ECO:0007744" key="8">
    <source>
    </source>
</evidence>
<evidence type="ECO:0007744" key="9">
    <source>
    </source>
</evidence>
<evidence type="ECO:0007744" key="10">
    <source>
    </source>
</evidence>
<evidence type="ECO:0007829" key="11">
    <source>
        <dbReference type="PDB" id="4O3F"/>
    </source>
</evidence>
<dbReference type="EC" id="2.7.11.1" evidence="2"/>
<dbReference type="EC" id="2.7.2.3" evidence="2"/>
<dbReference type="EMBL" id="M15668">
    <property type="protein sequence ID" value="AAA70267.1"/>
    <property type="molecule type" value="mRNA"/>
</dbReference>
<dbReference type="EMBL" id="AK145846">
    <property type="protein sequence ID" value="BAE26693.1"/>
    <property type="molecule type" value="mRNA"/>
</dbReference>
<dbReference type="EMBL" id="AK167710">
    <property type="protein sequence ID" value="BAE39754.1"/>
    <property type="molecule type" value="mRNA"/>
</dbReference>
<dbReference type="EMBL" id="AK167459">
    <property type="protein sequence ID" value="BAE39544.1"/>
    <property type="molecule type" value="mRNA"/>
</dbReference>
<dbReference type="EMBL" id="AK167441">
    <property type="protein sequence ID" value="BAE39527.1"/>
    <property type="molecule type" value="mRNA"/>
</dbReference>
<dbReference type="EMBL" id="AK133877">
    <property type="protein sequence ID" value="BAE21906.1"/>
    <property type="molecule type" value="mRNA"/>
</dbReference>
<dbReference type="EMBL" id="AK164440">
    <property type="protein sequence ID" value="BAE37790.1"/>
    <property type="molecule type" value="mRNA"/>
</dbReference>
<dbReference type="EMBL" id="BX469914">
    <property type="status" value="NOT_ANNOTATED_CDS"/>
    <property type="molecule type" value="Genomic_DNA"/>
</dbReference>
<dbReference type="EMBL" id="BC083355">
    <property type="protein sequence ID" value="AAH83355.1"/>
    <property type="molecule type" value="mRNA"/>
</dbReference>
<dbReference type="EMBL" id="BC108372">
    <property type="protein sequence ID" value="AAI08373.1"/>
    <property type="molecule type" value="mRNA"/>
</dbReference>
<dbReference type="EMBL" id="M18735">
    <property type="protein sequence ID" value="AAA39919.1"/>
    <property type="molecule type" value="Genomic_DNA"/>
</dbReference>
<dbReference type="EMBL" id="X55309">
    <property type="protein sequence ID" value="CAA39013.1"/>
    <property type="molecule type" value="Genomic_DNA"/>
</dbReference>
<dbReference type="EMBL" id="X15339">
    <property type="protein sequence ID" value="CAA33391.1"/>
    <property type="molecule type" value="Genomic_DNA"/>
</dbReference>
<dbReference type="CCDS" id="CCDS30339.1"/>
<dbReference type="PIR" id="A25567">
    <property type="entry name" value="A25567"/>
</dbReference>
<dbReference type="RefSeq" id="NP_032854.2">
    <property type="nucleotide sequence ID" value="NM_008828.3"/>
</dbReference>
<dbReference type="PDB" id="4O3F">
    <property type="method" value="X-ray"/>
    <property type="resolution" value="2.11 A"/>
    <property type="chains" value="A=1-417"/>
</dbReference>
<dbReference type="PDBsum" id="4O3F"/>
<dbReference type="SMR" id="P09411"/>
<dbReference type="BioGRID" id="202133">
    <property type="interactions" value="47"/>
</dbReference>
<dbReference type="DIP" id="DIP-51710N"/>
<dbReference type="FunCoup" id="P09411">
    <property type="interactions" value="1326"/>
</dbReference>
<dbReference type="IntAct" id="P09411">
    <property type="interactions" value="7"/>
</dbReference>
<dbReference type="MINT" id="P09411"/>
<dbReference type="STRING" id="10090.ENSMUSP00000080302"/>
<dbReference type="GlyGen" id="P09411">
    <property type="glycosylation" value="2 sites, 1 O-linked glycan (2 sites)"/>
</dbReference>
<dbReference type="iPTMnet" id="P09411"/>
<dbReference type="MetOSite" id="P09411"/>
<dbReference type="PhosphoSitePlus" id="P09411"/>
<dbReference type="SwissPalm" id="P09411"/>
<dbReference type="REPRODUCTION-2DPAGE" id="IPI00555069"/>
<dbReference type="REPRODUCTION-2DPAGE" id="P09411"/>
<dbReference type="jPOST" id="P09411"/>
<dbReference type="PaxDb" id="10090-ENSMUSP00000080302"/>
<dbReference type="PeptideAtlas" id="P09411"/>
<dbReference type="ProteomicsDB" id="301806"/>
<dbReference type="Pumba" id="P09411"/>
<dbReference type="Antibodypedia" id="4108">
    <property type="antibodies" value="479 antibodies from 39 providers"/>
</dbReference>
<dbReference type="DNASU" id="18655"/>
<dbReference type="Ensembl" id="ENSMUST00000081593.13">
    <property type="protein sequence ID" value="ENSMUSP00000080302.7"/>
    <property type="gene ID" value="ENSMUSG00000062070.13"/>
</dbReference>
<dbReference type="GeneID" id="18655"/>
<dbReference type="KEGG" id="mmu:18655"/>
<dbReference type="UCSC" id="uc009ubo.2">
    <property type="organism name" value="mouse"/>
</dbReference>
<dbReference type="AGR" id="MGI:97555"/>
<dbReference type="CTD" id="5230"/>
<dbReference type="MGI" id="MGI:97555">
    <property type="gene designation" value="Pgk1"/>
</dbReference>
<dbReference type="VEuPathDB" id="HostDB:ENSMUSG00000062070"/>
<dbReference type="eggNOG" id="KOG1367">
    <property type="taxonomic scope" value="Eukaryota"/>
</dbReference>
<dbReference type="GeneTree" id="ENSGT00390000008820"/>
<dbReference type="HOGENOM" id="CLU_025427_0_0_1"/>
<dbReference type="InParanoid" id="P09411"/>
<dbReference type="OMA" id="DMIFDIG"/>
<dbReference type="OrthoDB" id="275353at2759"/>
<dbReference type="PhylomeDB" id="P09411"/>
<dbReference type="TreeFam" id="TF300489"/>
<dbReference type="BRENDA" id="2.7.2.3">
    <property type="organism ID" value="3474"/>
</dbReference>
<dbReference type="Reactome" id="R-MMU-70171">
    <property type="pathway name" value="Glycolysis"/>
</dbReference>
<dbReference type="Reactome" id="R-MMU-70263">
    <property type="pathway name" value="Gluconeogenesis"/>
</dbReference>
<dbReference type="SABIO-RK" id="P09411"/>
<dbReference type="UniPathway" id="UPA00109">
    <property type="reaction ID" value="UER00185"/>
</dbReference>
<dbReference type="BioGRID-ORCS" id="18655">
    <property type="hits" value="30 hits in 76 CRISPR screens"/>
</dbReference>
<dbReference type="ChiTaRS" id="Pgk1">
    <property type="organism name" value="mouse"/>
</dbReference>
<dbReference type="EvolutionaryTrace" id="P09411"/>
<dbReference type="PRO" id="PR:P09411"/>
<dbReference type="Proteomes" id="UP000000589">
    <property type="component" value="Chromosome X"/>
</dbReference>
<dbReference type="RNAct" id="P09411">
    <property type="molecule type" value="protein"/>
</dbReference>
<dbReference type="Bgee" id="ENSMUSG00000062070">
    <property type="expression patterns" value="Expressed in quadriceps femoris and 136 other cell types or tissues"/>
</dbReference>
<dbReference type="ExpressionAtlas" id="P09411">
    <property type="expression patterns" value="baseline and differential"/>
</dbReference>
<dbReference type="GO" id="GO:0005737">
    <property type="term" value="C:cytoplasm"/>
    <property type="evidence" value="ECO:0000266"/>
    <property type="project" value="MGI"/>
</dbReference>
<dbReference type="GO" id="GO:0005829">
    <property type="term" value="C:cytosol"/>
    <property type="evidence" value="ECO:0000314"/>
    <property type="project" value="MGI"/>
</dbReference>
<dbReference type="GO" id="GO:0005615">
    <property type="term" value="C:extracellular space"/>
    <property type="evidence" value="ECO:0007669"/>
    <property type="project" value="Ensembl"/>
</dbReference>
<dbReference type="GO" id="GO:0045121">
    <property type="term" value="C:membrane raft"/>
    <property type="evidence" value="ECO:0007669"/>
    <property type="project" value="Ensembl"/>
</dbReference>
<dbReference type="GO" id="GO:0005759">
    <property type="term" value="C:mitochondrial matrix"/>
    <property type="evidence" value="ECO:0000250"/>
    <property type="project" value="UniProtKB"/>
</dbReference>
<dbReference type="GO" id="GO:0005524">
    <property type="term" value="F:ATP binding"/>
    <property type="evidence" value="ECO:0000250"/>
    <property type="project" value="UniProtKB"/>
</dbReference>
<dbReference type="GO" id="GO:0046872">
    <property type="term" value="F:metal ion binding"/>
    <property type="evidence" value="ECO:0007669"/>
    <property type="project" value="UniProtKB-KW"/>
</dbReference>
<dbReference type="GO" id="GO:0004618">
    <property type="term" value="F:phosphoglycerate kinase activity"/>
    <property type="evidence" value="ECO:0000314"/>
    <property type="project" value="MGI"/>
</dbReference>
<dbReference type="GO" id="GO:0106310">
    <property type="term" value="F:protein serine kinase activity"/>
    <property type="evidence" value="ECO:0007669"/>
    <property type="project" value="RHEA"/>
</dbReference>
<dbReference type="GO" id="GO:0004674">
    <property type="term" value="F:protein serine/threonine kinase activity"/>
    <property type="evidence" value="ECO:0007669"/>
    <property type="project" value="Ensembl"/>
</dbReference>
<dbReference type="GO" id="GO:0047134">
    <property type="term" value="F:protein-disulfide reductase [NAD(P)H] activity"/>
    <property type="evidence" value="ECO:0007669"/>
    <property type="project" value="Ensembl"/>
</dbReference>
<dbReference type="GO" id="GO:0044325">
    <property type="term" value="F:transmembrane transporter binding"/>
    <property type="evidence" value="ECO:0000353"/>
    <property type="project" value="ARUK-UCL"/>
</dbReference>
<dbReference type="GO" id="GO:0061621">
    <property type="term" value="P:canonical glycolysis"/>
    <property type="evidence" value="ECO:0000316"/>
    <property type="project" value="MGI"/>
</dbReference>
<dbReference type="GO" id="GO:0071456">
    <property type="term" value="P:cellular response to hypoxia"/>
    <property type="evidence" value="ECO:0007669"/>
    <property type="project" value="Ensembl"/>
</dbReference>
<dbReference type="GO" id="GO:0030855">
    <property type="term" value="P:epithelial cell differentiation"/>
    <property type="evidence" value="ECO:0007669"/>
    <property type="project" value="Ensembl"/>
</dbReference>
<dbReference type="GO" id="GO:0006094">
    <property type="term" value="P:gluconeogenesis"/>
    <property type="evidence" value="ECO:0000316"/>
    <property type="project" value="MGI"/>
</dbReference>
<dbReference type="GO" id="GO:0046166">
    <property type="term" value="P:glyceraldehyde-3-phosphate biosynthetic process"/>
    <property type="evidence" value="ECO:0000266"/>
    <property type="project" value="MGI"/>
</dbReference>
<dbReference type="GO" id="GO:0006096">
    <property type="term" value="P:glycolytic process"/>
    <property type="evidence" value="ECO:0000314"/>
    <property type="project" value="MGI"/>
</dbReference>
<dbReference type="GO" id="GO:0160218">
    <property type="term" value="P:negative regulation of acetyl-CoA biosynthetic process from pyruvate"/>
    <property type="evidence" value="ECO:0007669"/>
    <property type="project" value="Ensembl"/>
</dbReference>
<dbReference type="GO" id="GO:0016525">
    <property type="term" value="P:negative regulation of angiogenesis"/>
    <property type="evidence" value="ECO:0007669"/>
    <property type="project" value="Ensembl"/>
</dbReference>
<dbReference type="GO" id="GO:0031639">
    <property type="term" value="P:plasminogen activation"/>
    <property type="evidence" value="ECO:0007669"/>
    <property type="project" value="Ensembl"/>
</dbReference>
<dbReference type="CDD" id="cd00318">
    <property type="entry name" value="Phosphoglycerate_kinase"/>
    <property type="match status" value="1"/>
</dbReference>
<dbReference type="FunFam" id="3.40.50.1260:FF:000019">
    <property type="entry name" value="Phosphoglycerate kinase 1"/>
    <property type="match status" value="1"/>
</dbReference>
<dbReference type="FunFam" id="3.40.50.1260:FF:000031">
    <property type="entry name" value="Phosphoglycerate kinase 1"/>
    <property type="match status" value="1"/>
</dbReference>
<dbReference type="Gene3D" id="3.40.50.1260">
    <property type="entry name" value="Phosphoglycerate kinase, N-terminal domain"/>
    <property type="match status" value="3"/>
</dbReference>
<dbReference type="HAMAP" id="MF_00145">
    <property type="entry name" value="Phosphoglyc_kinase"/>
    <property type="match status" value="1"/>
</dbReference>
<dbReference type="InterPro" id="IPR001576">
    <property type="entry name" value="Phosphoglycerate_kinase"/>
</dbReference>
<dbReference type="InterPro" id="IPR015911">
    <property type="entry name" value="Phosphoglycerate_kinase_CS"/>
</dbReference>
<dbReference type="InterPro" id="IPR015824">
    <property type="entry name" value="Phosphoglycerate_kinase_N"/>
</dbReference>
<dbReference type="InterPro" id="IPR036043">
    <property type="entry name" value="Phosphoglycerate_kinase_sf"/>
</dbReference>
<dbReference type="PANTHER" id="PTHR11406">
    <property type="entry name" value="PHOSPHOGLYCERATE KINASE"/>
    <property type="match status" value="1"/>
</dbReference>
<dbReference type="PANTHER" id="PTHR11406:SF14">
    <property type="entry name" value="PHOSPHOGLYCERATE KINASE 1"/>
    <property type="match status" value="1"/>
</dbReference>
<dbReference type="Pfam" id="PF00162">
    <property type="entry name" value="PGK"/>
    <property type="match status" value="1"/>
</dbReference>
<dbReference type="PIRSF" id="PIRSF000724">
    <property type="entry name" value="Pgk"/>
    <property type="match status" value="1"/>
</dbReference>
<dbReference type="PRINTS" id="PR00477">
    <property type="entry name" value="PHGLYCKINASE"/>
</dbReference>
<dbReference type="SUPFAM" id="SSF53748">
    <property type="entry name" value="Phosphoglycerate kinase"/>
    <property type="match status" value="1"/>
</dbReference>
<dbReference type="PROSITE" id="PS00111">
    <property type="entry name" value="PGLYCERATE_KINASE"/>
    <property type="match status" value="1"/>
</dbReference>
<accession>P09411</accession>
<accession>Q3TPE6</accession>
<accession>Q3UKV8</accession>
<accession>Q5XJE7</accession>